<accession>Q5P722</accession>
<evidence type="ECO:0000255" key="1">
    <source>
        <dbReference type="HAMAP-Rule" id="MF_00083"/>
    </source>
</evidence>
<proteinExistence type="inferred from homology"/>
<reference key="1">
    <citation type="journal article" date="2005" name="Arch. Microbiol.">
        <title>The genome sequence of an anaerobic aromatic-degrading denitrifying bacterium, strain EbN1.</title>
        <authorList>
            <person name="Rabus R."/>
            <person name="Kube M."/>
            <person name="Heider J."/>
            <person name="Beck A."/>
            <person name="Heitmann K."/>
            <person name="Widdel F."/>
            <person name="Reinhardt R."/>
        </authorList>
    </citation>
    <scope>NUCLEOTIDE SEQUENCE [LARGE SCALE GENOMIC DNA]</scope>
    <source>
        <strain>DSM 19018 / LMG 30748 / EbN1</strain>
    </source>
</reference>
<comment type="function">
    <text evidence="1">Hydrolyzes ribosome-free peptidyl-tRNAs (with 1 or more amino acids incorporated), which drop off the ribosome during protein synthesis, or as a result of ribosome stalling.</text>
</comment>
<comment type="function">
    <text evidence="1">Catalyzes the release of premature peptidyl moieties from peptidyl-tRNA molecules trapped in stalled 50S ribosomal subunits, and thus maintains levels of free tRNAs and 50S ribosomes.</text>
</comment>
<comment type="catalytic activity">
    <reaction evidence="1">
        <text>an N-acyl-L-alpha-aminoacyl-tRNA + H2O = an N-acyl-L-amino acid + a tRNA + H(+)</text>
        <dbReference type="Rhea" id="RHEA:54448"/>
        <dbReference type="Rhea" id="RHEA-COMP:10123"/>
        <dbReference type="Rhea" id="RHEA-COMP:13883"/>
        <dbReference type="ChEBI" id="CHEBI:15377"/>
        <dbReference type="ChEBI" id="CHEBI:15378"/>
        <dbReference type="ChEBI" id="CHEBI:59874"/>
        <dbReference type="ChEBI" id="CHEBI:78442"/>
        <dbReference type="ChEBI" id="CHEBI:138191"/>
        <dbReference type="EC" id="3.1.1.29"/>
    </reaction>
</comment>
<comment type="subunit">
    <text evidence="1">Monomer.</text>
</comment>
<comment type="subcellular location">
    <subcellularLocation>
        <location evidence="1">Cytoplasm</location>
    </subcellularLocation>
</comment>
<comment type="similarity">
    <text evidence="1">Belongs to the PTH family.</text>
</comment>
<protein>
    <recommendedName>
        <fullName evidence="1">Peptidyl-tRNA hydrolase</fullName>
        <shortName evidence="1">Pth</shortName>
        <ecNumber evidence="1">3.1.1.29</ecNumber>
    </recommendedName>
</protein>
<sequence length="196" mass="21577">MSAAAPRLVVGLGNPGAEYTETRHNAGFRFCERLADKLGVRFSHESRFHGFVANARDAGVWLLMPQTYMNRSGQAVGALARFYRIAPAEILVVHDELDIPPGQLRLKFGGGLGGHNGLKDTSAHLATNDYWRLRIGIGHPGDRNEVVNYVLKPARREEQGQIDEALDRALAAWPMIARGEWNAATTRLNARPAALK</sequence>
<keyword id="KW-0963">Cytoplasm</keyword>
<keyword id="KW-0378">Hydrolase</keyword>
<keyword id="KW-1185">Reference proteome</keyword>
<keyword id="KW-0694">RNA-binding</keyword>
<keyword id="KW-0820">tRNA-binding</keyword>
<gene>
    <name evidence="1" type="primary">pth</name>
    <name type="ordered locus">AZOSEA07660</name>
    <name type="ORF">ebA1411</name>
</gene>
<name>PTH_AROAE</name>
<organism>
    <name type="scientific">Aromatoleum aromaticum (strain DSM 19018 / LMG 30748 / EbN1)</name>
    <name type="common">Azoarcus sp. (strain EbN1)</name>
    <dbReference type="NCBI Taxonomy" id="76114"/>
    <lineage>
        <taxon>Bacteria</taxon>
        <taxon>Pseudomonadati</taxon>
        <taxon>Pseudomonadota</taxon>
        <taxon>Betaproteobacteria</taxon>
        <taxon>Rhodocyclales</taxon>
        <taxon>Rhodocyclaceae</taxon>
        <taxon>Aromatoleum</taxon>
    </lineage>
</organism>
<dbReference type="EC" id="3.1.1.29" evidence="1"/>
<dbReference type="EMBL" id="CR555306">
    <property type="protein sequence ID" value="CAI06889.1"/>
    <property type="molecule type" value="Genomic_DNA"/>
</dbReference>
<dbReference type="RefSeq" id="WP_011236617.1">
    <property type="nucleotide sequence ID" value="NC_006513.1"/>
</dbReference>
<dbReference type="SMR" id="Q5P722"/>
<dbReference type="STRING" id="76114.ebA1411"/>
<dbReference type="KEGG" id="eba:ebA1411"/>
<dbReference type="eggNOG" id="COG0193">
    <property type="taxonomic scope" value="Bacteria"/>
</dbReference>
<dbReference type="HOGENOM" id="CLU_062456_3_1_4"/>
<dbReference type="OrthoDB" id="9800507at2"/>
<dbReference type="Proteomes" id="UP000006552">
    <property type="component" value="Chromosome"/>
</dbReference>
<dbReference type="GO" id="GO:0005737">
    <property type="term" value="C:cytoplasm"/>
    <property type="evidence" value="ECO:0007669"/>
    <property type="project" value="UniProtKB-SubCell"/>
</dbReference>
<dbReference type="GO" id="GO:0004045">
    <property type="term" value="F:peptidyl-tRNA hydrolase activity"/>
    <property type="evidence" value="ECO:0007669"/>
    <property type="project" value="UniProtKB-UniRule"/>
</dbReference>
<dbReference type="GO" id="GO:0000049">
    <property type="term" value="F:tRNA binding"/>
    <property type="evidence" value="ECO:0007669"/>
    <property type="project" value="UniProtKB-UniRule"/>
</dbReference>
<dbReference type="GO" id="GO:0006515">
    <property type="term" value="P:protein quality control for misfolded or incompletely synthesized proteins"/>
    <property type="evidence" value="ECO:0007669"/>
    <property type="project" value="UniProtKB-UniRule"/>
</dbReference>
<dbReference type="GO" id="GO:0072344">
    <property type="term" value="P:rescue of stalled ribosome"/>
    <property type="evidence" value="ECO:0007669"/>
    <property type="project" value="UniProtKB-UniRule"/>
</dbReference>
<dbReference type="CDD" id="cd00462">
    <property type="entry name" value="PTH"/>
    <property type="match status" value="1"/>
</dbReference>
<dbReference type="FunFam" id="3.40.50.1470:FF:000001">
    <property type="entry name" value="Peptidyl-tRNA hydrolase"/>
    <property type="match status" value="1"/>
</dbReference>
<dbReference type="Gene3D" id="3.40.50.1470">
    <property type="entry name" value="Peptidyl-tRNA hydrolase"/>
    <property type="match status" value="1"/>
</dbReference>
<dbReference type="HAMAP" id="MF_00083">
    <property type="entry name" value="Pept_tRNA_hydro_bact"/>
    <property type="match status" value="1"/>
</dbReference>
<dbReference type="InterPro" id="IPR001328">
    <property type="entry name" value="Pept_tRNA_hydro"/>
</dbReference>
<dbReference type="InterPro" id="IPR018171">
    <property type="entry name" value="Pept_tRNA_hydro_CS"/>
</dbReference>
<dbReference type="InterPro" id="IPR036416">
    <property type="entry name" value="Pept_tRNA_hydro_sf"/>
</dbReference>
<dbReference type="NCBIfam" id="TIGR00447">
    <property type="entry name" value="pth"/>
    <property type="match status" value="1"/>
</dbReference>
<dbReference type="PANTHER" id="PTHR17224">
    <property type="entry name" value="PEPTIDYL-TRNA HYDROLASE"/>
    <property type="match status" value="1"/>
</dbReference>
<dbReference type="PANTHER" id="PTHR17224:SF1">
    <property type="entry name" value="PEPTIDYL-TRNA HYDROLASE"/>
    <property type="match status" value="1"/>
</dbReference>
<dbReference type="Pfam" id="PF01195">
    <property type="entry name" value="Pept_tRNA_hydro"/>
    <property type="match status" value="1"/>
</dbReference>
<dbReference type="SUPFAM" id="SSF53178">
    <property type="entry name" value="Peptidyl-tRNA hydrolase-like"/>
    <property type="match status" value="1"/>
</dbReference>
<dbReference type="PROSITE" id="PS01196">
    <property type="entry name" value="PEPT_TRNA_HYDROL_2"/>
    <property type="match status" value="1"/>
</dbReference>
<feature type="chain" id="PRO_0000187682" description="Peptidyl-tRNA hydrolase">
    <location>
        <begin position="1"/>
        <end position="196"/>
    </location>
</feature>
<feature type="active site" description="Proton acceptor" evidence="1">
    <location>
        <position position="24"/>
    </location>
</feature>
<feature type="binding site" evidence="1">
    <location>
        <position position="19"/>
    </location>
    <ligand>
        <name>tRNA</name>
        <dbReference type="ChEBI" id="CHEBI:17843"/>
    </ligand>
</feature>
<feature type="binding site" evidence="1">
    <location>
        <position position="68"/>
    </location>
    <ligand>
        <name>tRNA</name>
        <dbReference type="ChEBI" id="CHEBI:17843"/>
    </ligand>
</feature>
<feature type="binding site" evidence="1">
    <location>
        <position position="70"/>
    </location>
    <ligand>
        <name>tRNA</name>
        <dbReference type="ChEBI" id="CHEBI:17843"/>
    </ligand>
</feature>
<feature type="binding site" evidence="1">
    <location>
        <position position="116"/>
    </location>
    <ligand>
        <name>tRNA</name>
        <dbReference type="ChEBI" id="CHEBI:17843"/>
    </ligand>
</feature>
<feature type="site" description="Discriminates between blocked and unblocked aminoacyl-tRNA" evidence="1">
    <location>
        <position position="14"/>
    </location>
</feature>
<feature type="site" description="Stabilizes the basic form of H active site to accept a proton" evidence="1">
    <location>
        <position position="95"/>
    </location>
</feature>